<proteinExistence type="inferred from homology"/>
<protein>
    <recommendedName>
        <fullName evidence="1">Apolipoprotein N-acyltransferase</fullName>
        <shortName evidence="1">ALP N-acyltransferase</shortName>
        <ecNumber evidence="1">2.3.1.269</ecNumber>
    </recommendedName>
</protein>
<gene>
    <name evidence="1" type="primary">lnt</name>
    <name type="ordered locus">PSPTO_4808</name>
</gene>
<keyword id="KW-0012">Acyltransferase</keyword>
<keyword id="KW-0997">Cell inner membrane</keyword>
<keyword id="KW-1003">Cell membrane</keyword>
<keyword id="KW-0472">Membrane</keyword>
<keyword id="KW-1185">Reference proteome</keyword>
<keyword id="KW-0808">Transferase</keyword>
<keyword id="KW-0812">Transmembrane</keyword>
<keyword id="KW-1133">Transmembrane helix</keyword>
<reference key="1">
    <citation type="journal article" date="2003" name="Proc. Natl. Acad. Sci. U.S.A.">
        <title>The complete genome sequence of the Arabidopsis and tomato pathogen Pseudomonas syringae pv. tomato DC3000.</title>
        <authorList>
            <person name="Buell C.R."/>
            <person name="Joardar V."/>
            <person name="Lindeberg M."/>
            <person name="Selengut J."/>
            <person name="Paulsen I.T."/>
            <person name="Gwinn M.L."/>
            <person name="Dodson R.J."/>
            <person name="DeBoy R.T."/>
            <person name="Durkin A.S."/>
            <person name="Kolonay J.F."/>
            <person name="Madupu R."/>
            <person name="Daugherty S.C."/>
            <person name="Brinkac L.M."/>
            <person name="Beanan M.J."/>
            <person name="Haft D.H."/>
            <person name="Nelson W.C."/>
            <person name="Davidsen T.M."/>
            <person name="Zafar N."/>
            <person name="Zhou L."/>
            <person name="Liu J."/>
            <person name="Yuan Q."/>
            <person name="Khouri H.M."/>
            <person name="Fedorova N.B."/>
            <person name="Tran B."/>
            <person name="Russell D."/>
            <person name="Berry K.J."/>
            <person name="Utterback T.R."/>
            <person name="Van Aken S.E."/>
            <person name="Feldblyum T.V."/>
            <person name="D'Ascenzo M."/>
            <person name="Deng W.-L."/>
            <person name="Ramos A.R."/>
            <person name="Alfano J.R."/>
            <person name="Cartinhour S."/>
            <person name="Chatterjee A.K."/>
            <person name="Delaney T.P."/>
            <person name="Lazarowitz S.G."/>
            <person name="Martin G.B."/>
            <person name="Schneider D.J."/>
            <person name="Tang X."/>
            <person name="Bender C.L."/>
            <person name="White O."/>
            <person name="Fraser C.M."/>
            <person name="Collmer A."/>
        </authorList>
    </citation>
    <scope>NUCLEOTIDE SEQUENCE [LARGE SCALE GENOMIC DNA]</scope>
    <source>
        <strain>ATCC BAA-871 / DC3000</strain>
    </source>
</reference>
<evidence type="ECO:0000255" key="1">
    <source>
        <dbReference type="HAMAP-Rule" id="MF_01148"/>
    </source>
</evidence>
<organism>
    <name type="scientific">Pseudomonas syringae pv. tomato (strain ATCC BAA-871 / DC3000)</name>
    <dbReference type="NCBI Taxonomy" id="223283"/>
    <lineage>
        <taxon>Bacteria</taxon>
        <taxon>Pseudomonadati</taxon>
        <taxon>Pseudomonadota</taxon>
        <taxon>Gammaproteobacteria</taxon>
        <taxon>Pseudomonadales</taxon>
        <taxon>Pseudomonadaceae</taxon>
        <taxon>Pseudomonas</taxon>
    </lineage>
</organism>
<sequence length="506" mass="55914">MRWITRPGWPGNLLALAAGGLTTLALAPFDFWPLVLVSVAMFYLGLRELSPRQALARGWCYGFGLYGAGTSWIYVSIHTYGGASALLAGLLMLLFIAAIALFFALPAWVWARWLRRNEAPLADSLAFAALWLWQEAFRGWFLTGFPWLYSGYSQLDAPLAGLAPVGGVWLISFALGLTAALLCNLHRLRARKSFLAMGVLLLLAPWVAGLALKDHAWTSPSGPPLKVAAMQGNIEQSMKWDPQKLNDQLALYRDMTFRSQQADLIVWPETAVPVLKESAEGYLSMMGKFAADRGAALITGVPVREPTGRGEYSYYNGITVTGQGDGTYFKQKLVPFGEYVPLQDLLRGLISFFDLPMSDFARGPNDQALLQAKGYHIAPFICYEVVYPEFAAGLSAQSDLLLTVSNDTWFGTSIGPLQHLQMAQMRALEAGRWMIRATNNGVTALIDPFGRITVQIPQFERGVLYGEVVPMHELTPYLHWRSWPLAIVCLLLFGWALLAARISKTV</sequence>
<name>LNT_PSESM</name>
<dbReference type="EC" id="2.3.1.269" evidence="1"/>
<dbReference type="EMBL" id="AE016853">
    <property type="protein sequence ID" value="AAO58237.1"/>
    <property type="molecule type" value="Genomic_DNA"/>
</dbReference>
<dbReference type="RefSeq" id="NP_794542.1">
    <property type="nucleotide sequence ID" value="NC_004578.1"/>
</dbReference>
<dbReference type="RefSeq" id="WP_011105186.1">
    <property type="nucleotide sequence ID" value="NC_004578.1"/>
</dbReference>
<dbReference type="SMR" id="Q87VX7"/>
<dbReference type="STRING" id="223283.PSPTO_4808"/>
<dbReference type="DNASU" id="1186491"/>
<dbReference type="GeneID" id="1186491"/>
<dbReference type="KEGG" id="pst:PSPTO_4808"/>
<dbReference type="PATRIC" id="fig|223283.9.peg.4919"/>
<dbReference type="eggNOG" id="COG0815">
    <property type="taxonomic scope" value="Bacteria"/>
</dbReference>
<dbReference type="HOGENOM" id="CLU_019563_3_0_6"/>
<dbReference type="OrthoDB" id="9804277at2"/>
<dbReference type="PhylomeDB" id="Q87VX7"/>
<dbReference type="UniPathway" id="UPA00666"/>
<dbReference type="Proteomes" id="UP000002515">
    <property type="component" value="Chromosome"/>
</dbReference>
<dbReference type="GO" id="GO:0005886">
    <property type="term" value="C:plasma membrane"/>
    <property type="evidence" value="ECO:0007669"/>
    <property type="project" value="UniProtKB-SubCell"/>
</dbReference>
<dbReference type="GO" id="GO:0016410">
    <property type="term" value="F:N-acyltransferase activity"/>
    <property type="evidence" value="ECO:0007669"/>
    <property type="project" value="UniProtKB-UniRule"/>
</dbReference>
<dbReference type="GO" id="GO:0042158">
    <property type="term" value="P:lipoprotein biosynthetic process"/>
    <property type="evidence" value="ECO:0007669"/>
    <property type="project" value="UniProtKB-UniRule"/>
</dbReference>
<dbReference type="CDD" id="cd07571">
    <property type="entry name" value="ALP_N-acyl_transferase"/>
    <property type="match status" value="1"/>
</dbReference>
<dbReference type="Gene3D" id="3.60.110.10">
    <property type="entry name" value="Carbon-nitrogen hydrolase"/>
    <property type="match status" value="1"/>
</dbReference>
<dbReference type="HAMAP" id="MF_01148">
    <property type="entry name" value="Lnt"/>
    <property type="match status" value="1"/>
</dbReference>
<dbReference type="InterPro" id="IPR004563">
    <property type="entry name" value="Apolipo_AcylTrfase"/>
</dbReference>
<dbReference type="InterPro" id="IPR003010">
    <property type="entry name" value="C-N_Hydrolase"/>
</dbReference>
<dbReference type="InterPro" id="IPR036526">
    <property type="entry name" value="C-N_Hydrolase_sf"/>
</dbReference>
<dbReference type="InterPro" id="IPR045378">
    <property type="entry name" value="LNT_N"/>
</dbReference>
<dbReference type="NCBIfam" id="TIGR00546">
    <property type="entry name" value="lnt"/>
    <property type="match status" value="1"/>
</dbReference>
<dbReference type="PANTHER" id="PTHR38686">
    <property type="entry name" value="APOLIPOPROTEIN N-ACYLTRANSFERASE"/>
    <property type="match status" value="1"/>
</dbReference>
<dbReference type="PANTHER" id="PTHR38686:SF1">
    <property type="entry name" value="APOLIPOPROTEIN N-ACYLTRANSFERASE"/>
    <property type="match status" value="1"/>
</dbReference>
<dbReference type="Pfam" id="PF00795">
    <property type="entry name" value="CN_hydrolase"/>
    <property type="match status" value="1"/>
</dbReference>
<dbReference type="Pfam" id="PF20154">
    <property type="entry name" value="LNT_N"/>
    <property type="match status" value="1"/>
</dbReference>
<dbReference type="SUPFAM" id="SSF56317">
    <property type="entry name" value="Carbon-nitrogen hydrolase"/>
    <property type="match status" value="1"/>
</dbReference>
<dbReference type="PROSITE" id="PS50263">
    <property type="entry name" value="CN_HYDROLASE"/>
    <property type="match status" value="1"/>
</dbReference>
<accession>Q87VX7</accession>
<feature type="chain" id="PRO_0000178086" description="Apolipoprotein N-acyltransferase">
    <location>
        <begin position="1"/>
        <end position="506"/>
    </location>
</feature>
<feature type="transmembrane region" description="Helical" evidence="1">
    <location>
        <begin position="24"/>
        <end position="44"/>
    </location>
</feature>
<feature type="transmembrane region" description="Helical" evidence="1">
    <location>
        <begin position="58"/>
        <end position="78"/>
    </location>
</feature>
<feature type="transmembrane region" description="Helical" evidence="1">
    <location>
        <begin position="85"/>
        <end position="105"/>
    </location>
</feature>
<feature type="transmembrane region" description="Helical" evidence="1">
    <location>
        <begin position="125"/>
        <end position="145"/>
    </location>
</feature>
<feature type="transmembrane region" description="Helical" evidence="1">
    <location>
        <begin position="162"/>
        <end position="182"/>
    </location>
</feature>
<feature type="transmembrane region" description="Helical" evidence="1">
    <location>
        <begin position="192"/>
        <end position="212"/>
    </location>
</feature>
<feature type="transmembrane region" description="Helical" evidence="1">
    <location>
        <begin position="482"/>
        <end position="502"/>
    </location>
</feature>
<feature type="domain" description="CN hydrolase" evidence="1">
    <location>
        <begin position="230"/>
        <end position="470"/>
    </location>
</feature>
<feature type="active site" description="Proton acceptor" evidence="1">
    <location>
        <position position="269"/>
    </location>
</feature>
<feature type="active site" evidence="1">
    <location>
        <position position="330"/>
    </location>
</feature>
<feature type="active site" description="Nucleophile" evidence="1">
    <location>
        <position position="382"/>
    </location>
</feature>
<comment type="function">
    <text evidence="1">Catalyzes the phospholipid dependent N-acylation of the N-terminal cysteine of apolipoprotein, the last step in lipoprotein maturation.</text>
</comment>
<comment type="catalytic activity">
    <reaction evidence="1">
        <text>N-terminal S-1,2-diacyl-sn-glyceryl-L-cysteinyl-[lipoprotein] + a glycerophospholipid = N-acyl-S-1,2-diacyl-sn-glyceryl-L-cysteinyl-[lipoprotein] + a 2-acyl-sn-glycero-3-phospholipid + H(+)</text>
        <dbReference type="Rhea" id="RHEA:48228"/>
        <dbReference type="Rhea" id="RHEA-COMP:14681"/>
        <dbReference type="Rhea" id="RHEA-COMP:14684"/>
        <dbReference type="ChEBI" id="CHEBI:15378"/>
        <dbReference type="ChEBI" id="CHEBI:136912"/>
        <dbReference type="ChEBI" id="CHEBI:140656"/>
        <dbReference type="ChEBI" id="CHEBI:140657"/>
        <dbReference type="ChEBI" id="CHEBI:140660"/>
        <dbReference type="EC" id="2.3.1.269"/>
    </reaction>
</comment>
<comment type="pathway">
    <text evidence="1">Protein modification; lipoprotein biosynthesis (N-acyl transfer).</text>
</comment>
<comment type="subcellular location">
    <subcellularLocation>
        <location evidence="1">Cell inner membrane</location>
        <topology evidence="1">Multi-pass membrane protein</topology>
    </subcellularLocation>
</comment>
<comment type="similarity">
    <text evidence="1">Belongs to the CN hydrolase family. Apolipoprotein N-acyltransferase subfamily.</text>
</comment>